<feature type="chain" id="PRO_0000411800" description="Probable Xaa-Pro aminopeptidase P">
    <location>
        <begin position="1"/>
        <end position="616"/>
    </location>
</feature>
<feature type="binding site" evidence="1">
    <location>
        <position position="413"/>
    </location>
    <ligand>
        <name>Mn(2+)</name>
        <dbReference type="ChEBI" id="CHEBI:29035"/>
        <label>2</label>
    </ligand>
</feature>
<feature type="binding site" evidence="1">
    <location>
        <position position="424"/>
    </location>
    <ligand>
        <name>Mn(2+)</name>
        <dbReference type="ChEBI" id="CHEBI:29035"/>
        <label>1</label>
    </ligand>
</feature>
<feature type="binding site" evidence="1">
    <location>
        <position position="424"/>
    </location>
    <ligand>
        <name>Mn(2+)</name>
        <dbReference type="ChEBI" id="CHEBI:29035"/>
        <label>2</label>
    </ligand>
</feature>
<feature type="binding site" evidence="1">
    <location>
        <position position="522"/>
    </location>
    <ligand>
        <name>Mn(2+)</name>
        <dbReference type="ChEBI" id="CHEBI:29035"/>
        <label>1</label>
    </ligand>
</feature>
<feature type="binding site" evidence="1">
    <location>
        <position position="536"/>
    </location>
    <ligand>
        <name>Mn(2+)</name>
        <dbReference type="ChEBI" id="CHEBI:29035"/>
        <label>1</label>
    </ligand>
</feature>
<feature type="binding site" evidence="1">
    <location>
        <position position="536"/>
    </location>
    <ligand>
        <name>Mn(2+)</name>
        <dbReference type="ChEBI" id="CHEBI:29035"/>
        <label>2</label>
    </ligand>
</feature>
<evidence type="ECO:0000250" key="1"/>
<evidence type="ECO:0000305" key="2"/>
<protein>
    <recommendedName>
        <fullName>Probable Xaa-Pro aminopeptidase P</fullName>
        <shortName>AMPP</shortName>
        <shortName>Aminopeptidase P</shortName>
        <ecNumber>3.4.11.9</ecNumber>
    </recommendedName>
    <alternativeName>
        <fullName>Aminoacylproline aminopeptidase</fullName>
    </alternativeName>
    <alternativeName>
        <fullName>Prolidase</fullName>
    </alternativeName>
</protein>
<keyword id="KW-0031">Aminopeptidase</keyword>
<keyword id="KW-0378">Hydrolase</keyword>
<keyword id="KW-0464">Manganese</keyword>
<keyword id="KW-0479">Metal-binding</keyword>
<keyword id="KW-0482">Metalloprotease</keyword>
<keyword id="KW-0645">Protease</keyword>
<keyword id="KW-1185">Reference proteome</keyword>
<gene>
    <name type="primary">AMPP</name>
    <name type="ORF">PAAG_07319</name>
</gene>
<comment type="function">
    <text evidence="1">Catalyzes the removal of a penultimate prolyl residue from the N-termini of peptides.</text>
</comment>
<comment type="catalytic activity">
    <reaction>
        <text>Release of any N-terminal amino acid, including proline, that is linked to proline, even from a dipeptide or tripeptide.</text>
        <dbReference type="EC" id="3.4.11.9"/>
    </reaction>
</comment>
<comment type="cofactor">
    <cofactor evidence="1">
        <name>Mn(2+)</name>
        <dbReference type="ChEBI" id="CHEBI:29035"/>
    </cofactor>
    <text evidence="1">Binds 2 manganese ions per subunit.</text>
</comment>
<comment type="similarity">
    <text evidence="2">Belongs to the peptidase M24B family.</text>
</comment>
<accession>C1H978</accession>
<dbReference type="EC" id="3.4.11.9"/>
<dbReference type="EMBL" id="KN294014">
    <property type="protein sequence ID" value="EEH36901.2"/>
    <property type="molecule type" value="Genomic_DNA"/>
</dbReference>
<dbReference type="RefSeq" id="XP_015700634.1">
    <property type="nucleotide sequence ID" value="XM_015846199.1"/>
</dbReference>
<dbReference type="SMR" id="C1H978"/>
<dbReference type="STRING" id="502779.C1H978"/>
<dbReference type="GeneID" id="9094019"/>
<dbReference type="KEGG" id="pbl:PAAG_07319"/>
<dbReference type="VEuPathDB" id="FungiDB:PAAG_07319"/>
<dbReference type="eggNOG" id="KOG2413">
    <property type="taxonomic scope" value="Eukaryota"/>
</dbReference>
<dbReference type="HOGENOM" id="CLU_011781_2_3_1"/>
<dbReference type="OMA" id="EPGMILS"/>
<dbReference type="OrthoDB" id="9995434at2759"/>
<dbReference type="Proteomes" id="UP000002059">
    <property type="component" value="Partially assembled WGS sequence"/>
</dbReference>
<dbReference type="GO" id="GO:0005737">
    <property type="term" value="C:cytoplasm"/>
    <property type="evidence" value="ECO:0007669"/>
    <property type="project" value="UniProtKB-ARBA"/>
</dbReference>
<dbReference type="GO" id="GO:0046872">
    <property type="term" value="F:metal ion binding"/>
    <property type="evidence" value="ECO:0007669"/>
    <property type="project" value="UniProtKB-KW"/>
</dbReference>
<dbReference type="GO" id="GO:0070006">
    <property type="term" value="F:metalloaminopeptidase activity"/>
    <property type="evidence" value="ECO:0007669"/>
    <property type="project" value="InterPro"/>
</dbReference>
<dbReference type="GO" id="GO:0006508">
    <property type="term" value="P:proteolysis"/>
    <property type="evidence" value="ECO:0007669"/>
    <property type="project" value="UniProtKB-KW"/>
</dbReference>
<dbReference type="CDD" id="cd01085">
    <property type="entry name" value="APP"/>
    <property type="match status" value="1"/>
</dbReference>
<dbReference type="FunFam" id="3.40.350.10:FF:000010">
    <property type="entry name" value="Probable Xaa-Pro aminopeptidase P"/>
    <property type="match status" value="1"/>
</dbReference>
<dbReference type="FunFam" id="3.90.230.10:FF:000007">
    <property type="entry name" value="Xaa-Pro aminopeptidase P"/>
    <property type="match status" value="1"/>
</dbReference>
<dbReference type="FunFam" id="3.40.350.10:FF:000003">
    <property type="entry name" value="Xaa-pro aminopeptidase P"/>
    <property type="match status" value="1"/>
</dbReference>
<dbReference type="Gene3D" id="3.90.230.10">
    <property type="entry name" value="Creatinase/methionine aminopeptidase superfamily"/>
    <property type="match status" value="1"/>
</dbReference>
<dbReference type="Gene3D" id="3.40.350.10">
    <property type="entry name" value="Creatinase/prolidase N-terminal domain"/>
    <property type="match status" value="2"/>
</dbReference>
<dbReference type="InterPro" id="IPR029149">
    <property type="entry name" value="Creatin/AminoP/Spt16_N"/>
</dbReference>
<dbReference type="InterPro" id="IPR036005">
    <property type="entry name" value="Creatinase/aminopeptidase-like"/>
</dbReference>
<dbReference type="InterPro" id="IPR000587">
    <property type="entry name" value="Creatinase_N"/>
</dbReference>
<dbReference type="InterPro" id="IPR000994">
    <property type="entry name" value="Pept_M24"/>
</dbReference>
<dbReference type="InterPro" id="IPR033740">
    <property type="entry name" value="Pept_M24B"/>
</dbReference>
<dbReference type="InterPro" id="IPR032416">
    <property type="entry name" value="Peptidase_M24_C"/>
</dbReference>
<dbReference type="InterPro" id="IPR001131">
    <property type="entry name" value="Peptidase_M24B_aminopep-P_CS"/>
</dbReference>
<dbReference type="InterPro" id="IPR050422">
    <property type="entry name" value="X-Pro_aminopeptidase_P"/>
</dbReference>
<dbReference type="PANTHER" id="PTHR43763">
    <property type="entry name" value="XAA-PRO AMINOPEPTIDASE 1"/>
    <property type="match status" value="1"/>
</dbReference>
<dbReference type="PANTHER" id="PTHR43763:SF6">
    <property type="entry name" value="XAA-PRO AMINOPEPTIDASE 1"/>
    <property type="match status" value="1"/>
</dbReference>
<dbReference type="Pfam" id="PF01321">
    <property type="entry name" value="Creatinase_N"/>
    <property type="match status" value="1"/>
</dbReference>
<dbReference type="Pfam" id="PF16189">
    <property type="entry name" value="Creatinase_N_2"/>
    <property type="match status" value="1"/>
</dbReference>
<dbReference type="Pfam" id="PF00557">
    <property type="entry name" value="Peptidase_M24"/>
    <property type="match status" value="1"/>
</dbReference>
<dbReference type="Pfam" id="PF16188">
    <property type="entry name" value="Peptidase_M24_C"/>
    <property type="match status" value="1"/>
</dbReference>
<dbReference type="SUPFAM" id="SSF55920">
    <property type="entry name" value="Creatinase/aminopeptidase"/>
    <property type="match status" value="1"/>
</dbReference>
<dbReference type="SUPFAM" id="SSF53092">
    <property type="entry name" value="Creatinase/prolidase N-terminal domain"/>
    <property type="match status" value="1"/>
</dbReference>
<dbReference type="PROSITE" id="PS00491">
    <property type="entry name" value="PROLINE_PEPTIDASE"/>
    <property type="match status" value="1"/>
</dbReference>
<organism>
    <name type="scientific">Paracoccidioides lutzii (strain ATCC MYA-826 / Pb01)</name>
    <name type="common">Paracoccidioides brasiliensis</name>
    <dbReference type="NCBI Taxonomy" id="502779"/>
    <lineage>
        <taxon>Eukaryota</taxon>
        <taxon>Fungi</taxon>
        <taxon>Dikarya</taxon>
        <taxon>Ascomycota</taxon>
        <taxon>Pezizomycotina</taxon>
        <taxon>Eurotiomycetes</taxon>
        <taxon>Eurotiomycetidae</taxon>
        <taxon>Onygenales</taxon>
        <taxon>Ajellomycetaceae</taxon>
        <taxon>Paracoccidioides</taxon>
    </lineage>
</organism>
<name>AMPP1_PARBA</name>
<reference key="1">
    <citation type="journal article" date="2011" name="PLoS Genet.">
        <title>Comparative genomic analysis of human fungal pathogens causing paracoccidioidomycosis.</title>
        <authorList>
            <person name="Desjardins C.A."/>
            <person name="Champion M.D."/>
            <person name="Holder J.W."/>
            <person name="Muszewska A."/>
            <person name="Goldberg J."/>
            <person name="Bailao A.M."/>
            <person name="Brigido M.M."/>
            <person name="Ferreira M.E."/>
            <person name="Garcia A.M."/>
            <person name="Grynberg M."/>
            <person name="Gujja S."/>
            <person name="Heiman D.I."/>
            <person name="Henn M.R."/>
            <person name="Kodira C.D."/>
            <person name="Leon-Narvaez H."/>
            <person name="Longo L.V.G."/>
            <person name="Ma L.-J."/>
            <person name="Malavazi I."/>
            <person name="Matsuo A.L."/>
            <person name="Morais F.V."/>
            <person name="Pereira M."/>
            <person name="Rodriguez-Brito S."/>
            <person name="Sakthikumar S."/>
            <person name="Salem-Izacc S.M."/>
            <person name="Sykes S.M."/>
            <person name="Teixeira M.M."/>
            <person name="Vallejo M.C."/>
            <person name="Walter M.E."/>
            <person name="Yandava C."/>
            <person name="Young S."/>
            <person name="Zeng Q."/>
            <person name="Zucker J."/>
            <person name="Felipe M.S."/>
            <person name="Goldman G.H."/>
            <person name="Haas B.J."/>
            <person name="McEwen J.G."/>
            <person name="Nino-Vega G."/>
            <person name="Puccia R."/>
            <person name="San-Blas G."/>
            <person name="Soares C.M."/>
            <person name="Birren B.W."/>
            <person name="Cuomo C.A."/>
        </authorList>
    </citation>
    <scope>NUCLEOTIDE SEQUENCE [LARGE SCALE GENOMIC DNA]</scope>
    <source>
        <strain>ATCC MYA-826 / Pb01</strain>
    </source>
</reference>
<proteinExistence type="inferred from homology"/>
<sequence>METVDTSQRLACLRELMKERKVDVYLVPSEDSHQSEYIAPCDGRREFISGFSGSAGCAIVSMTKAALSTDGRYFNQASKQLDNNWLLLKRGIESMPTWQEWTAEQLEGGKVVGVDPSLITASDARSLSETIKKSGGSLLGLQENLVDLVWGKDRPSRPSKKVTVHPVEFAGKSFEEKITDLRKELEKKKSAGFVVSMLDEIAWLFNLRGNDIPYNPVFFAYAIITPSTADLYIDEDKLSADVKKHLGDKVSLKPYTSIFEDAKALGQSAQAEVNGGASDPPRKFFISTKASWSLSLALGGENKVEEVRSPISDAKAIKNDAELEGMRACHIRDGAALTKYFAWLENELLNKKTVLNEVEASDKLEEIRSKQKNFVGLSFDTISSSGPNAAVIHYKAERNNCSIIDPEAVYLCDSGAQYLDGTTDTTRTLHFGEPTEKERKAYTLVLKGMIAIDTAIFPKGTTGFSLDTFARQFLWKEGLDYLHGTGHGVGSYLNVHEGPIGIGTRVQYSEVPISAGNVISDEPGFYEDGNFGIRIENIIMAREVKTTFSFGERPWLGFEHVTMTPLCRKLTDPSLLSDAEKIWINEYHNEVWEKTSGYFEEDELTRNWLKRETQPI</sequence>